<sequence length="318" mass="35638">MVGYDAKADARSNSKLEVAVAGSVSGFVTRALISPLDVIKIRFQLQLERVCPSDPNAKYHGILQAAKQILQEEGPRAFWKGHVPAQILSIGYGAVQFLAFEELTELLYQANLYQTHQFSAHFVCGGLSAGTATLTVHPVDVLRTRLAAQGEPKIYSNLREAIRTMYRTEGPFVFYKGLTPTVIAIFPYAGLQFSCYRSLKRAYDWIMPPDGKQTGNLKNLLCGCGSGVISKTLTYPLDLFKKRLQVRGFEHARSAFGQVRSYRGLLDLAQQVLQHEGTRGFFKGLSPSLMKAALSTGFMFFWYELFCNLFHCIRREDR</sequence>
<dbReference type="EMBL" id="AABR07030782">
    <property type="status" value="NOT_ANNOTATED_CDS"/>
    <property type="molecule type" value="Genomic_DNA"/>
</dbReference>
<dbReference type="EMBL" id="CH473948">
    <property type="protein sequence ID" value="EDM06602.1"/>
    <property type="molecule type" value="Genomic_DNA"/>
</dbReference>
<dbReference type="EMBL" id="BC079002">
    <property type="protein sequence ID" value="AAH79002.1"/>
    <property type="molecule type" value="mRNA"/>
</dbReference>
<dbReference type="RefSeq" id="NP_001007675.1">
    <property type="nucleotide sequence ID" value="NM_001007674.1"/>
</dbReference>
<dbReference type="RefSeq" id="XP_063125304.1">
    <property type="nucleotide sequence ID" value="XM_063269234.1"/>
</dbReference>
<dbReference type="RefSeq" id="XP_063125305.1">
    <property type="nucleotide sequence ID" value="XM_063269235.1"/>
</dbReference>
<dbReference type="RefSeq" id="XP_063125306.1">
    <property type="nucleotide sequence ID" value="XM_063269236.1"/>
</dbReference>
<dbReference type="SMR" id="Q6AYL0"/>
<dbReference type="FunCoup" id="Q6AYL0">
    <property type="interactions" value="551"/>
</dbReference>
<dbReference type="STRING" id="10116.ENSRNOP00000005292"/>
<dbReference type="PhosphoSitePlus" id="Q6AYL0"/>
<dbReference type="PaxDb" id="10116-ENSRNOP00000005292"/>
<dbReference type="GeneID" id="303676"/>
<dbReference type="KEGG" id="rno:303676"/>
<dbReference type="AGR" id="RGD:1359554"/>
<dbReference type="CTD" id="60386"/>
<dbReference type="RGD" id="1359554">
    <property type="gene designation" value="Slc25a19"/>
</dbReference>
<dbReference type="VEuPathDB" id="HostDB:ENSRNOG00000003918"/>
<dbReference type="eggNOG" id="KOG0752">
    <property type="taxonomic scope" value="Eukaryota"/>
</dbReference>
<dbReference type="HOGENOM" id="CLU_015166_10_3_1"/>
<dbReference type="InParanoid" id="Q6AYL0"/>
<dbReference type="OrthoDB" id="5687at9989"/>
<dbReference type="TreeFam" id="TF313047"/>
<dbReference type="PRO" id="PR:Q6AYL0"/>
<dbReference type="Proteomes" id="UP000002494">
    <property type="component" value="Unplaced"/>
</dbReference>
<dbReference type="Proteomes" id="UP000234681">
    <property type="component" value="Chromosome 10"/>
</dbReference>
<dbReference type="Bgee" id="ENSRNOG00000003918">
    <property type="expression patterns" value="Expressed in heart and 19 other cell types or tissues"/>
</dbReference>
<dbReference type="GO" id="GO:0005743">
    <property type="term" value="C:mitochondrial inner membrane"/>
    <property type="evidence" value="ECO:0000266"/>
    <property type="project" value="RGD"/>
</dbReference>
<dbReference type="GO" id="GO:0005739">
    <property type="term" value="C:mitochondrion"/>
    <property type="evidence" value="ECO:0000266"/>
    <property type="project" value="RGD"/>
</dbReference>
<dbReference type="GO" id="GO:0015297">
    <property type="term" value="F:antiporter activity"/>
    <property type="evidence" value="ECO:0007669"/>
    <property type="project" value="UniProtKB-KW"/>
</dbReference>
<dbReference type="GO" id="GO:0090422">
    <property type="term" value="F:thiamine pyrophosphate transmembrane transporter activity"/>
    <property type="evidence" value="ECO:0000266"/>
    <property type="project" value="RGD"/>
</dbReference>
<dbReference type="GO" id="GO:0015234">
    <property type="term" value="F:thiamine transmembrane transporter activity"/>
    <property type="evidence" value="ECO:0000318"/>
    <property type="project" value="GO_Central"/>
</dbReference>
<dbReference type="GO" id="GO:0009229">
    <property type="term" value="P:thiamine diphosphate biosynthetic process"/>
    <property type="evidence" value="ECO:0000266"/>
    <property type="project" value="RGD"/>
</dbReference>
<dbReference type="GO" id="GO:0030974">
    <property type="term" value="P:thiamine pyrophosphate transmembrane transport"/>
    <property type="evidence" value="ECO:0000266"/>
    <property type="project" value="RGD"/>
</dbReference>
<dbReference type="FunFam" id="1.50.40.10:FF:000011">
    <property type="entry name" value="Mitochondrial thiamine pyrophosphate carrier 1"/>
    <property type="match status" value="1"/>
</dbReference>
<dbReference type="Gene3D" id="1.50.40.10">
    <property type="entry name" value="Mitochondrial carrier domain"/>
    <property type="match status" value="1"/>
</dbReference>
<dbReference type="InterPro" id="IPR002067">
    <property type="entry name" value="Mit_carrier"/>
</dbReference>
<dbReference type="InterPro" id="IPR018108">
    <property type="entry name" value="Mitochondrial_sb/sol_carrier"/>
</dbReference>
<dbReference type="InterPro" id="IPR023395">
    <property type="entry name" value="Mt_carrier_dom_sf"/>
</dbReference>
<dbReference type="PANTHER" id="PTHR24089">
    <property type="entry name" value="SOLUTE CARRIER FAMILY 25"/>
    <property type="match status" value="1"/>
</dbReference>
<dbReference type="Pfam" id="PF00153">
    <property type="entry name" value="Mito_carr"/>
    <property type="match status" value="3"/>
</dbReference>
<dbReference type="PRINTS" id="PR00926">
    <property type="entry name" value="MITOCARRIER"/>
</dbReference>
<dbReference type="SUPFAM" id="SSF103506">
    <property type="entry name" value="Mitochondrial carrier"/>
    <property type="match status" value="1"/>
</dbReference>
<dbReference type="PROSITE" id="PS50920">
    <property type="entry name" value="SOLCAR"/>
    <property type="match status" value="3"/>
</dbReference>
<proteinExistence type="evidence at transcript level"/>
<gene>
    <name type="primary">Slc25a19</name>
    <name evidence="6" type="synonym">LOC100910173</name>
</gene>
<keyword id="KW-0050">Antiport</keyword>
<keyword id="KW-0472">Membrane</keyword>
<keyword id="KW-0496">Mitochondrion</keyword>
<keyword id="KW-1185">Reference proteome</keyword>
<keyword id="KW-0677">Repeat</keyword>
<keyword id="KW-0812">Transmembrane</keyword>
<keyword id="KW-1133">Transmembrane helix</keyword>
<keyword id="KW-0813">Transport</keyword>
<organism evidence="5">
    <name type="scientific">Rattus norvegicus</name>
    <name type="common">Rat</name>
    <dbReference type="NCBI Taxonomy" id="10116"/>
    <lineage>
        <taxon>Eukaryota</taxon>
        <taxon>Metazoa</taxon>
        <taxon>Chordata</taxon>
        <taxon>Craniata</taxon>
        <taxon>Vertebrata</taxon>
        <taxon>Euteleostomi</taxon>
        <taxon>Mammalia</taxon>
        <taxon>Eutheria</taxon>
        <taxon>Euarchontoglires</taxon>
        <taxon>Glires</taxon>
        <taxon>Rodentia</taxon>
        <taxon>Myomorpha</taxon>
        <taxon>Muroidea</taxon>
        <taxon>Muridae</taxon>
        <taxon>Murinae</taxon>
        <taxon>Rattus</taxon>
    </lineage>
</organism>
<evidence type="ECO:0000250" key="1">
    <source>
        <dbReference type="UniProtKB" id="Q9HC21"/>
    </source>
</evidence>
<evidence type="ECO:0000255" key="2"/>
<evidence type="ECO:0000255" key="3">
    <source>
        <dbReference type="PROSITE-ProRule" id="PRU00282"/>
    </source>
</evidence>
<evidence type="ECO:0000305" key="4"/>
<evidence type="ECO:0000312" key="5">
    <source>
        <dbReference type="EMBL" id="AAH79002.1"/>
    </source>
</evidence>
<evidence type="ECO:0000312" key="6">
    <source>
        <dbReference type="RGD" id="1359554"/>
    </source>
</evidence>
<feature type="chain" id="PRO_0000457116" description="Mitochondrial thiamine pyrophosphate carrier">
    <location>
        <begin position="1"/>
        <end position="318"/>
    </location>
</feature>
<feature type="transmembrane region" description="Helical; Name=1" evidence="2">
    <location>
        <begin position="19"/>
        <end position="39"/>
    </location>
</feature>
<feature type="transmembrane region" description="Helical; Name=2" evidence="2">
    <location>
        <begin position="87"/>
        <end position="107"/>
    </location>
</feature>
<feature type="transmembrane region" description="Helical; Name=3" evidence="2">
    <location>
        <begin position="122"/>
        <end position="142"/>
    </location>
</feature>
<feature type="transmembrane region" description="Helical; Name=4" evidence="2">
    <location>
        <begin position="173"/>
        <end position="193"/>
    </location>
</feature>
<feature type="transmembrane region" description="Helical; Name=5" evidence="2">
    <location>
        <begin position="220"/>
        <end position="240"/>
    </location>
</feature>
<feature type="transmembrane region" description="Helical; Name=6" evidence="2">
    <location>
        <begin position="293"/>
        <end position="313"/>
    </location>
</feature>
<feature type="repeat" description="Solcar 1" evidence="3">
    <location>
        <begin position="13"/>
        <end position="106"/>
    </location>
</feature>
<feature type="repeat" description="Solcar 2" evidence="3">
    <location>
        <begin position="116"/>
        <end position="202"/>
    </location>
</feature>
<feature type="repeat" description="Solcar 3" evidence="3">
    <location>
        <begin position="214"/>
        <end position="309"/>
    </location>
</feature>
<comment type="function">
    <text evidence="1">Mitochondrial transporter mediating uptake of thiamine diphosphate into mitochondria. It is not clear if the antiporter activity is affected by the membrane potential or by the proton electrochemical gradient.</text>
</comment>
<comment type="catalytic activity">
    <reaction evidence="1">
        <text>thiamine phosphate(out) + thiamine diphosphate(in) = thiamine phosphate(in) + thiamine diphosphate(out)</text>
        <dbReference type="Rhea" id="RHEA:73383"/>
        <dbReference type="ChEBI" id="CHEBI:37575"/>
        <dbReference type="ChEBI" id="CHEBI:58937"/>
    </reaction>
</comment>
<comment type="subcellular location">
    <subcellularLocation>
        <location evidence="1">Mitochondrion membrane</location>
        <topology evidence="2">Multi-pass membrane protein</topology>
    </subcellularLocation>
</comment>
<comment type="similarity">
    <text evidence="4">Belongs to the mitochondrial carrier (TC 2.A.29) family.</text>
</comment>
<comment type="caution">
    <text evidence="1">Previously identified as the mitochondrial deoxyribonucleotide carrier. However other experiments later demonstrated that SLC25A19 is a thiamine diphosphate transporter and not a mitochondrial deoxyribonucleotide carrier.</text>
</comment>
<accession>Q6AYL0</accession>
<reference key="1">
    <citation type="journal article" date="2004" name="Nature">
        <title>Genome sequence of the Brown Norway rat yields insights into mammalian evolution.</title>
        <authorList>
            <person name="Gibbs R.A."/>
            <person name="Weinstock G.M."/>
            <person name="Metzker M.L."/>
            <person name="Muzny D.M."/>
            <person name="Sodergren E.J."/>
            <person name="Scherer S."/>
            <person name="Scott G."/>
            <person name="Steffen D."/>
            <person name="Worley K.C."/>
            <person name="Burch P.E."/>
            <person name="Okwuonu G."/>
            <person name="Hines S."/>
            <person name="Lewis L."/>
            <person name="Deramo C."/>
            <person name="Delgado O."/>
            <person name="Dugan-Rocha S."/>
            <person name="Miner G."/>
            <person name="Morgan M."/>
            <person name="Hawes A."/>
            <person name="Gill R."/>
            <person name="Holt R.A."/>
            <person name="Adams M.D."/>
            <person name="Amanatides P.G."/>
            <person name="Baden-Tillson H."/>
            <person name="Barnstead M."/>
            <person name="Chin S."/>
            <person name="Evans C.A."/>
            <person name="Ferriera S."/>
            <person name="Fosler C."/>
            <person name="Glodek A."/>
            <person name="Gu Z."/>
            <person name="Jennings D."/>
            <person name="Kraft C.L."/>
            <person name="Nguyen T."/>
            <person name="Pfannkoch C.M."/>
            <person name="Sitter C."/>
            <person name="Sutton G.G."/>
            <person name="Venter J.C."/>
            <person name="Woodage T."/>
            <person name="Smith D."/>
            <person name="Lee H.-M."/>
            <person name="Gustafson E."/>
            <person name="Cahill P."/>
            <person name="Kana A."/>
            <person name="Doucette-Stamm L."/>
            <person name="Weinstock K."/>
            <person name="Fechtel K."/>
            <person name="Weiss R.B."/>
            <person name="Dunn D.M."/>
            <person name="Green E.D."/>
            <person name="Blakesley R.W."/>
            <person name="Bouffard G.G."/>
            <person name="De Jong P.J."/>
            <person name="Osoegawa K."/>
            <person name="Zhu B."/>
            <person name="Marra M."/>
            <person name="Schein J."/>
            <person name="Bosdet I."/>
            <person name="Fjell C."/>
            <person name="Jones S."/>
            <person name="Krzywinski M."/>
            <person name="Mathewson C."/>
            <person name="Siddiqui A."/>
            <person name="Wye N."/>
            <person name="McPherson J."/>
            <person name="Zhao S."/>
            <person name="Fraser C.M."/>
            <person name="Shetty J."/>
            <person name="Shatsman S."/>
            <person name="Geer K."/>
            <person name="Chen Y."/>
            <person name="Abramzon S."/>
            <person name="Nierman W.C."/>
            <person name="Havlak P.H."/>
            <person name="Chen R."/>
            <person name="Durbin K.J."/>
            <person name="Egan A."/>
            <person name="Ren Y."/>
            <person name="Song X.-Z."/>
            <person name="Li B."/>
            <person name="Liu Y."/>
            <person name="Qin X."/>
            <person name="Cawley S."/>
            <person name="Cooney A.J."/>
            <person name="D'Souza L.M."/>
            <person name="Martin K."/>
            <person name="Wu J.Q."/>
            <person name="Gonzalez-Garay M.L."/>
            <person name="Jackson A.R."/>
            <person name="Kalafus K.J."/>
            <person name="McLeod M.P."/>
            <person name="Milosavljevic A."/>
            <person name="Virk D."/>
            <person name="Volkov A."/>
            <person name="Wheeler D.A."/>
            <person name="Zhang Z."/>
            <person name="Bailey J.A."/>
            <person name="Eichler E.E."/>
            <person name="Tuzun E."/>
            <person name="Birney E."/>
            <person name="Mongin E."/>
            <person name="Ureta-Vidal A."/>
            <person name="Woodwark C."/>
            <person name="Zdobnov E."/>
            <person name="Bork P."/>
            <person name="Suyama M."/>
            <person name="Torrents D."/>
            <person name="Alexandersson M."/>
            <person name="Trask B.J."/>
            <person name="Young J.M."/>
            <person name="Huang H."/>
            <person name="Wang H."/>
            <person name="Xing H."/>
            <person name="Daniels S."/>
            <person name="Gietzen D."/>
            <person name="Schmidt J."/>
            <person name="Stevens K."/>
            <person name="Vitt U."/>
            <person name="Wingrove J."/>
            <person name="Camara F."/>
            <person name="Mar Alba M."/>
            <person name="Abril J.F."/>
            <person name="Guigo R."/>
            <person name="Smit A."/>
            <person name="Dubchak I."/>
            <person name="Rubin E.M."/>
            <person name="Couronne O."/>
            <person name="Poliakov A."/>
            <person name="Huebner N."/>
            <person name="Ganten D."/>
            <person name="Goesele C."/>
            <person name="Hummel O."/>
            <person name="Kreitler T."/>
            <person name="Lee Y.-A."/>
            <person name="Monti J."/>
            <person name="Schulz H."/>
            <person name="Zimdahl H."/>
            <person name="Himmelbauer H."/>
            <person name="Lehrach H."/>
            <person name="Jacob H.J."/>
            <person name="Bromberg S."/>
            <person name="Gullings-Handley J."/>
            <person name="Jensen-Seaman M.I."/>
            <person name="Kwitek A.E."/>
            <person name="Lazar J."/>
            <person name="Pasko D."/>
            <person name="Tonellato P.J."/>
            <person name="Twigger S."/>
            <person name="Ponting C.P."/>
            <person name="Duarte J.M."/>
            <person name="Rice S."/>
            <person name="Goodstadt L."/>
            <person name="Beatson S.A."/>
            <person name="Emes R.D."/>
            <person name="Winter E.E."/>
            <person name="Webber C."/>
            <person name="Brandt P."/>
            <person name="Nyakatura G."/>
            <person name="Adetobi M."/>
            <person name="Chiaromonte F."/>
            <person name="Elnitski L."/>
            <person name="Eswara P."/>
            <person name="Hardison R.C."/>
            <person name="Hou M."/>
            <person name="Kolbe D."/>
            <person name="Makova K."/>
            <person name="Miller W."/>
            <person name="Nekrutenko A."/>
            <person name="Riemer C."/>
            <person name="Schwartz S."/>
            <person name="Taylor J."/>
            <person name="Yang S."/>
            <person name="Zhang Y."/>
            <person name="Lindpaintner K."/>
            <person name="Andrews T.D."/>
            <person name="Caccamo M."/>
            <person name="Clamp M."/>
            <person name="Clarke L."/>
            <person name="Curwen V."/>
            <person name="Durbin R.M."/>
            <person name="Eyras E."/>
            <person name="Searle S.M."/>
            <person name="Cooper G.M."/>
            <person name="Batzoglou S."/>
            <person name="Brudno M."/>
            <person name="Sidow A."/>
            <person name="Stone E.A."/>
            <person name="Payseur B.A."/>
            <person name="Bourque G."/>
            <person name="Lopez-Otin C."/>
            <person name="Puente X.S."/>
            <person name="Chakrabarti K."/>
            <person name="Chatterji S."/>
            <person name="Dewey C."/>
            <person name="Pachter L."/>
            <person name="Bray N."/>
            <person name="Yap V.B."/>
            <person name="Caspi A."/>
            <person name="Tesler G."/>
            <person name="Pevzner P.A."/>
            <person name="Haussler D."/>
            <person name="Roskin K.M."/>
            <person name="Baertsch R."/>
            <person name="Clawson H."/>
            <person name="Furey T.S."/>
            <person name="Hinrichs A.S."/>
            <person name="Karolchik D."/>
            <person name="Kent W.J."/>
            <person name="Rosenbloom K.R."/>
            <person name="Trumbower H."/>
            <person name="Weirauch M."/>
            <person name="Cooper D.N."/>
            <person name="Stenson P.D."/>
            <person name="Ma B."/>
            <person name="Brent M."/>
            <person name="Arumugam M."/>
            <person name="Shteynberg D."/>
            <person name="Copley R.R."/>
            <person name="Taylor M.S."/>
            <person name="Riethman H."/>
            <person name="Mudunuri U."/>
            <person name="Peterson J."/>
            <person name="Guyer M."/>
            <person name="Felsenfeld A."/>
            <person name="Old S."/>
            <person name="Mockrin S."/>
            <person name="Collins F.S."/>
        </authorList>
    </citation>
    <scope>NUCLEOTIDE SEQUENCE [LARGE SCALE GENOMIC DNA]</scope>
    <source>
        <strain>Brown Norway</strain>
    </source>
</reference>
<reference key="2">
    <citation type="submission" date="2005-07" db="EMBL/GenBank/DDBJ databases">
        <authorList>
            <person name="Mural R.J."/>
            <person name="Adams M.D."/>
            <person name="Myers E.W."/>
            <person name="Smith H.O."/>
            <person name="Venter J.C."/>
        </authorList>
    </citation>
    <scope>NUCLEOTIDE SEQUENCE [LARGE SCALE GENOMIC DNA]</scope>
</reference>
<reference key="3">
    <citation type="journal article" date="2004" name="Genome Res.">
        <title>The status, quality, and expansion of the NIH full-length cDNA project: the Mammalian Gene Collection (MGC).</title>
        <authorList>
            <consortium name="The MGC Project Team"/>
        </authorList>
    </citation>
    <scope>NUCLEOTIDE SEQUENCE [LARGE SCALE MRNA]</scope>
    <source>
        <tissue>Testis</tissue>
    </source>
</reference>
<protein>
    <recommendedName>
        <fullName>Mitochondrial thiamine pyrophosphate carrier</fullName>
    </recommendedName>
    <alternativeName>
        <fullName>Mitochondrial uncoupling protein 1</fullName>
    </alternativeName>
    <alternativeName>
        <fullName>Solute carrier family 25 member 19</fullName>
    </alternativeName>
</protein>
<name>TPC_RAT</name>